<proteinExistence type="inferred from homology"/>
<sequence>MTKLVRSRLDLTWVFTTMKRLRLPVLAVLFLAISPVQGGEIQIPVIKDGEAQVIKELEDSDYWIRHDLWVETEFDLDGDGKLDRMHVSVTRPTQTDTQSLKLPVIYNSSPYFAGTTGGDESYFWDARQELGDEPPKRSAAPAIEREGTRPIISKRHVKDWLPRGFVVVHSSAPGTGLSQGCPTVGDDPEALAPKAVIDWLCGRAKGFTEPFGGEPVEAYWSSGKVGMTGTSYNGTIPLAAATTGVEGLEVIIPVAPNTSYYHYYRSNGLVRHPGGYLGEDIDILYDFIHSGGDEETRAYCDCHIRDEQMMANQDRATGDYNDFWYSRDYLNRVDGVKAAVLMAHAFNDWNVVPEHSIRIYEALKKNGVETQLFMHQGGHGGPPPISMMNRWFTHYLYGEDNGVEKGSKSWIVREKDERTKPTEYPQYPHPEAKDVVVYPVPGAPQRGRLQTAPLTEPITETLVDNFSFAGETLAQAEYTEHRLIYTTPELSEAVHLSGTPRIKLRLACDRPAANLSVWLVSLPWNTQKNSKITDNIITRGWADPQNIESMRESKPLVPGQFYDIEFDLQPDDQVIAKGQQIGLMVFSSDRDYTLHPTPGTKLTIDLQHTQLSLPVVGGTIPLESQD</sequence>
<organism>
    <name type="scientific">Rhodopirellula baltica (strain DSM 10527 / NCIMB 13988 / SH1)</name>
    <dbReference type="NCBI Taxonomy" id="243090"/>
    <lineage>
        <taxon>Bacteria</taxon>
        <taxon>Pseudomonadati</taxon>
        <taxon>Planctomycetota</taxon>
        <taxon>Planctomycetia</taxon>
        <taxon>Pirellulales</taxon>
        <taxon>Pirellulaceae</taxon>
        <taxon>Rhodopirellula</taxon>
    </lineage>
</organism>
<evidence type="ECO:0000250" key="1"/>
<evidence type="ECO:0000305" key="2"/>
<comment type="catalytic activity">
    <reaction>
        <text>Hydrolyzes Xaa-Pro-|- bonds to release unblocked, N-terminal dipeptides from substrates including Ala-Pro-|-p-nitroanilide and (sequentially) Tyr-Pro-|-Phe-Pro-|-Gly-Pro-|-Ile.</text>
        <dbReference type="EC" id="3.4.14.11"/>
    </reaction>
</comment>
<comment type="similarity">
    <text evidence="2">Belongs to the peptidase S15 family.</text>
</comment>
<reference key="1">
    <citation type="journal article" date="2003" name="Proc. Natl. Acad. Sci. U.S.A.">
        <title>Complete genome sequence of the marine planctomycete Pirellula sp. strain 1.</title>
        <authorList>
            <person name="Gloeckner F.O."/>
            <person name="Kube M."/>
            <person name="Bauer M."/>
            <person name="Teeling H."/>
            <person name="Lombardot T."/>
            <person name="Ludwig W."/>
            <person name="Gade D."/>
            <person name="Beck A."/>
            <person name="Borzym K."/>
            <person name="Heitmann K."/>
            <person name="Rabus R."/>
            <person name="Schlesner H."/>
            <person name="Amann R."/>
            <person name="Reinhardt R."/>
        </authorList>
    </citation>
    <scope>NUCLEOTIDE SEQUENCE [LARGE SCALE GENOMIC DNA]</scope>
    <source>
        <strain>DSM 10527 / NCIMB 13988 / SH1</strain>
    </source>
</reference>
<dbReference type="EC" id="3.4.14.11"/>
<dbReference type="EMBL" id="BX294150">
    <property type="protein sequence ID" value="CAD76400.1"/>
    <property type="molecule type" value="Genomic_DNA"/>
</dbReference>
<dbReference type="RefSeq" id="NP_869015.1">
    <property type="nucleotide sequence ID" value="NC_005027.1"/>
</dbReference>
<dbReference type="SMR" id="P59825"/>
<dbReference type="STRING" id="243090.RB9674"/>
<dbReference type="ESTHER" id="rhoba-pepx">
    <property type="family name" value="Lactobacillus_peptidase"/>
</dbReference>
<dbReference type="EnsemblBacteria" id="CAD76400">
    <property type="protein sequence ID" value="CAD76400"/>
    <property type="gene ID" value="RB9674"/>
</dbReference>
<dbReference type="KEGG" id="rba:RB9674"/>
<dbReference type="PATRIC" id="fig|243090.15.peg.4652"/>
<dbReference type="eggNOG" id="COG2936">
    <property type="taxonomic scope" value="Bacteria"/>
</dbReference>
<dbReference type="HOGENOM" id="CLU_011800_1_0_0"/>
<dbReference type="InParanoid" id="P59825"/>
<dbReference type="OrthoDB" id="238714at2"/>
<dbReference type="Proteomes" id="UP000001025">
    <property type="component" value="Chromosome"/>
</dbReference>
<dbReference type="GO" id="GO:0004177">
    <property type="term" value="F:aminopeptidase activity"/>
    <property type="evidence" value="ECO:0007669"/>
    <property type="project" value="UniProtKB-KW"/>
</dbReference>
<dbReference type="GO" id="GO:0008239">
    <property type="term" value="F:dipeptidyl-peptidase activity"/>
    <property type="evidence" value="ECO:0007669"/>
    <property type="project" value="UniProtKB-EC"/>
</dbReference>
<dbReference type="GO" id="GO:0008236">
    <property type="term" value="F:serine-type peptidase activity"/>
    <property type="evidence" value="ECO:0007669"/>
    <property type="project" value="UniProtKB-KW"/>
</dbReference>
<dbReference type="GO" id="GO:0006508">
    <property type="term" value="P:proteolysis"/>
    <property type="evidence" value="ECO:0007669"/>
    <property type="project" value="UniProtKB-KW"/>
</dbReference>
<dbReference type="Gene3D" id="3.40.50.1820">
    <property type="entry name" value="alpha/beta hydrolase"/>
    <property type="match status" value="2"/>
</dbReference>
<dbReference type="Gene3D" id="2.60.120.260">
    <property type="entry name" value="Galactose-binding domain-like"/>
    <property type="match status" value="1"/>
</dbReference>
<dbReference type="InterPro" id="IPR029058">
    <property type="entry name" value="AB_hydrolase_fold"/>
</dbReference>
<dbReference type="InterPro" id="IPR005674">
    <property type="entry name" value="CocE/Ser_esterase"/>
</dbReference>
<dbReference type="InterPro" id="IPR008979">
    <property type="entry name" value="Galactose-bd-like_sf"/>
</dbReference>
<dbReference type="InterPro" id="IPR008252">
    <property type="entry name" value="Pept_S15_Xpro"/>
</dbReference>
<dbReference type="InterPro" id="IPR000383">
    <property type="entry name" value="Xaa-Pro-like_dom"/>
</dbReference>
<dbReference type="InterPro" id="IPR013736">
    <property type="entry name" value="Xaa-Pro_dipept_C"/>
</dbReference>
<dbReference type="InterPro" id="IPR050585">
    <property type="entry name" value="Xaa-Pro_dipeptidyl-ppase/CocE"/>
</dbReference>
<dbReference type="NCBIfam" id="TIGR00976">
    <property type="entry name" value="CocE_NonD"/>
    <property type="match status" value="1"/>
</dbReference>
<dbReference type="NCBIfam" id="NF003780">
    <property type="entry name" value="PRK05371.1-1"/>
    <property type="match status" value="1"/>
</dbReference>
<dbReference type="PANTHER" id="PTHR43056:SF10">
    <property type="entry name" value="COCE_NOND FAMILY, PUTATIVE (AFU_ORTHOLOGUE AFUA_7G00600)-RELATED"/>
    <property type="match status" value="1"/>
</dbReference>
<dbReference type="PANTHER" id="PTHR43056">
    <property type="entry name" value="PEPTIDASE S9 PROLYL OLIGOPEPTIDASE"/>
    <property type="match status" value="1"/>
</dbReference>
<dbReference type="Pfam" id="PF02129">
    <property type="entry name" value="Peptidase_S15"/>
    <property type="match status" value="1"/>
</dbReference>
<dbReference type="Pfam" id="PF08530">
    <property type="entry name" value="PepX_C"/>
    <property type="match status" value="1"/>
</dbReference>
<dbReference type="PRINTS" id="PR00923">
    <property type="entry name" value="LACTOPTASE"/>
</dbReference>
<dbReference type="SMART" id="SM00939">
    <property type="entry name" value="PepX_C"/>
    <property type="match status" value="1"/>
</dbReference>
<dbReference type="SUPFAM" id="SSF53474">
    <property type="entry name" value="alpha/beta-Hydrolases"/>
    <property type="match status" value="1"/>
</dbReference>
<dbReference type="SUPFAM" id="SSF49785">
    <property type="entry name" value="Galactose-binding domain-like"/>
    <property type="match status" value="1"/>
</dbReference>
<feature type="chain" id="PRO_0000220238" description="Putative Xaa-Pro dipeptidyl-peptidase">
    <location>
        <begin position="1"/>
        <end position="626"/>
    </location>
</feature>
<feature type="active site" description="Charge relay system" evidence="1">
    <location>
        <position position="231"/>
    </location>
</feature>
<feature type="active site" description="Charge relay system" evidence="1">
    <location>
        <position position="348"/>
    </location>
</feature>
<feature type="active site" description="Charge relay system" evidence="1">
    <location>
        <position position="379"/>
    </location>
</feature>
<keyword id="KW-0031">Aminopeptidase</keyword>
<keyword id="KW-0378">Hydrolase</keyword>
<keyword id="KW-0645">Protease</keyword>
<keyword id="KW-1185">Reference proteome</keyword>
<keyword id="KW-0720">Serine protease</keyword>
<name>PEPX_RHOBA</name>
<protein>
    <recommendedName>
        <fullName>Putative Xaa-Pro dipeptidyl-peptidase</fullName>
        <shortName>X-Pro dipeptidyl-peptidase</shortName>
        <ecNumber>3.4.14.11</ecNumber>
    </recommendedName>
    <alternativeName>
        <fullName>X-prolyl-dipeptidyl aminopeptidase</fullName>
        <shortName>X-PDAP</shortName>
    </alternativeName>
</protein>
<gene>
    <name type="ordered locus">RB9674</name>
</gene>
<accession>P59825</accession>